<comment type="function">
    <text evidence="1">GTPase activator for the Rho-type GTPases by converting them to an inactive GDP-bound state.</text>
</comment>
<comment type="subunit">
    <text evidence="5">May interacts (via the Rho-GAP domain) with the active form of RAC1.</text>
</comment>
<comment type="alternative products">
    <event type="alternative splicing"/>
    <isoform>
        <id>Q6ZRI8-1</id>
        <name>1</name>
        <sequence type="displayed"/>
    </isoform>
    <isoform>
        <id>Q6ZRI8-2</id>
        <name>2</name>
        <sequence type="described" ref="VSP_021358"/>
    </isoform>
    <isoform>
        <id>Q6ZRI8-3</id>
        <name>3</name>
        <sequence type="described" ref="VSP_021357"/>
    </isoform>
    <isoform>
        <id>Q6ZRI8-4</id>
        <name>4</name>
        <sequence type="described" ref="VSP_039236"/>
    </isoform>
    <isoform>
        <id>Q6ZRI8-5</id>
        <name>5</name>
        <sequence type="described" ref="VSP_039235"/>
    </isoform>
</comment>
<comment type="tissue specificity">
    <text evidence="5">Detected in the outer root sheath of hair follicles at the level of the stem cell bulge, during the anagen and telogen phases of hair growth (at protein level).</text>
</comment>
<comment type="disease" evidence="5">
    <disease id="DI-06694">
        <name>Bazex-Dupre-Christol syndrome</name>
        <acronym>BDCS</acronym>
        <description>An X-linked dominant disorder characterized by a triad of congenital hypotrichosis, follicular atrophoderma affecting the dorsa of the hands and feet, the face and extensor surfaces of the elbows or knees, and the development of basocellular neoplasms including basal cell nevi and basal cell carcinomas from the second decade onwards. Other reported features include associated hair shaft abnormalities (pili torti and trichorrhexis nodosa) admixed with hypotrichosis, prominent milia affecting the face, hypohidrosis, pinched nose with hypoplastic nasal alae and prominent columella, atopic diathesis with comedones, keratosis pilaris, joint hypermobility, lingua plicata and hyperpigmentation of the forehead.</description>
        <dbReference type="MIM" id="301845"/>
    </disease>
    <text evidence="5">The gene represented in this entry may be involved in disease pathogenesis. In patients with Bazex-Dupre-Christol syndrome, ARHGAP36 is overexpressed in hair follicles during telogen, in basal cell carcinomas, and in trichoepitheliomas. This is due to small duplications in an intergenic region on chromosome Xq26 that harbor non-coding enhancer elements that control ARHGAP36 expression, and are responsible for disease development.</text>
</comment>
<comment type="sequence caution" evidence="8">
    <conflict type="erroneous initiation">
        <sequence resource="EMBL-CDS" id="AAH63790"/>
    </conflict>
    <text>Truncated N-terminus.</text>
</comment>
<gene>
    <name type="primary">ARHGAP36</name>
</gene>
<dbReference type="EMBL" id="AK054620">
    <property type="protein sequence ID" value="BAB70776.1"/>
    <property type="molecule type" value="mRNA"/>
</dbReference>
<dbReference type="EMBL" id="AK128203">
    <property type="protein sequence ID" value="BAC87322.1"/>
    <property type="molecule type" value="mRNA"/>
</dbReference>
<dbReference type="EMBL" id="AK294274">
    <property type="protein sequence ID" value="BAH11720.1"/>
    <property type="molecule type" value="mRNA"/>
</dbReference>
<dbReference type="EMBL" id="AK296748">
    <property type="protein sequence ID" value="BAH12425.1"/>
    <property type="molecule type" value="mRNA"/>
</dbReference>
<dbReference type="EMBL" id="AL590131">
    <property type="status" value="NOT_ANNOTATED_CDS"/>
    <property type="molecule type" value="Genomic_DNA"/>
</dbReference>
<dbReference type="EMBL" id="CH471107">
    <property type="protein sequence ID" value="EAX11793.1"/>
    <property type="molecule type" value="Genomic_DNA"/>
</dbReference>
<dbReference type="EMBL" id="BC063790">
    <property type="protein sequence ID" value="AAH63790.1"/>
    <property type="status" value="ALT_INIT"/>
    <property type="molecule type" value="mRNA"/>
</dbReference>
<dbReference type="CCDS" id="CCDS14628.1">
    <molecule id="Q6ZRI8-1"/>
</dbReference>
<dbReference type="CCDS" id="CCDS65320.1">
    <molecule id="Q6ZRI8-4"/>
</dbReference>
<dbReference type="CCDS" id="CCDS83489.1">
    <molecule id="Q6ZRI8-3"/>
</dbReference>
<dbReference type="RefSeq" id="NP_001269536.1">
    <molecule id="Q6ZRI8-4"/>
    <property type="nucleotide sequence ID" value="NM_001282607.2"/>
</dbReference>
<dbReference type="RefSeq" id="NP_001317580.1">
    <molecule id="Q6ZRI8-3"/>
    <property type="nucleotide sequence ID" value="NM_001330651.1"/>
</dbReference>
<dbReference type="RefSeq" id="NP_659404.2">
    <molecule id="Q6ZRI8-1"/>
    <property type="nucleotide sequence ID" value="NM_144967.3"/>
</dbReference>
<dbReference type="RefSeq" id="XP_011529582.1">
    <molecule id="Q6ZRI8-3"/>
    <property type="nucleotide sequence ID" value="XM_011531280.2"/>
</dbReference>
<dbReference type="RefSeq" id="XP_054182517.1">
    <molecule id="Q6ZRI8-3"/>
    <property type="nucleotide sequence ID" value="XM_054326542.1"/>
</dbReference>
<dbReference type="SMR" id="Q6ZRI8"/>
<dbReference type="BioGRID" id="127703">
    <property type="interactions" value="119"/>
</dbReference>
<dbReference type="FunCoup" id="Q6ZRI8">
    <property type="interactions" value="171"/>
</dbReference>
<dbReference type="IntAct" id="Q6ZRI8">
    <property type="interactions" value="73"/>
</dbReference>
<dbReference type="STRING" id="9606.ENSP00000276211"/>
<dbReference type="GlyCosmos" id="Q6ZRI8">
    <property type="glycosylation" value="2 sites, 1 glycan"/>
</dbReference>
<dbReference type="GlyGen" id="Q6ZRI8">
    <property type="glycosylation" value="2 sites, 1 O-linked glycan (2 sites)"/>
</dbReference>
<dbReference type="iPTMnet" id="Q6ZRI8"/>
<dbReference type="PhosphoSitePlus" id="Q6ZRI8"/>
<dbReference type="BioMuta" id="ARHGAP36"/>
<dbReference type="DMDM" id="74722974"/>
<dbReference type="jPOST" id="Q6ZRI8"/>
<dbReference type="MassIVE" id="Q6ZRI8"/>
<dbReference type="PaxDb" id="9606-ENSP00000276211"/>
<dbReference type="PeptideAtlas" id="Q6ZRI8"/>
<dbReference type="ProteomicsDB" id="68137">
    <molecule id="Q6ZRI8-1"/>
</dbReference>
<dbReference type="ProteomicsDB" id="68138">
    <molecule id="Q6ZRI8-2"/>
</dbReference>
<dbReference type="ProteomicsDB" id="68139">
    <molecule id="Q6ZRI8-3"/>
</dbReference>
<dbReference type="ProteomicsDB" id="68140">
    <molecule id="Q6ZRI8-4"/>
</dbReference>
<dbReference type="ProteomicsDB" id="68141">
    <molecule id="Q6ZRI8-5"/>
</dbReference>
<dbReference type="TopDownProteomics" id="Q6ZRI8-1">
    <molecule id="Q6ZRI8-1"/>
</dbReference>
<dbReference type="Antibodypedia" id="423">
    <property type="antibodies" value="110 antibodies from 22 providers"/>
</dbReference>
<dbReference type="DNASU" id="158763"/>
<dbReference type="Ensembl" id="ENST00000276211.10">
    <molecule id="Q6ZRI8-1"/>
    <property type="protein sequence ID" value="ENSP00000276211.5"/>
    <property type="gene ID" value="ENSG00000147256.12"/>
</dbReference>
<dbReference type="Ensembl" id="ENST00000370921.1">
    <molecule id="Q6ZRI8-3"/>
    <property type="protein sequence ID" value="ENSP00000359959.1"/>
    <property type="gene ID" value="ENSG00000147256.12"/>
</dbReference>
<dbReference type="Ensembl" id="ENST00000370922.5">
    <molecule id="Q6ZRI8-4"/>
    <property type="protein sequence ID" value="ENSP00000359960.1"/>
    <property type="gene ID" value="ENSG00000147256.12"/>
</dbReference>
<dbReference type="Ensembl" id="ENST00000412432.6">
    <molecule id="Q6ZRI8-2"/>
    <property type="protein sequence ID" value="ENSP00000408515.2"/>
    <property type="gene ID" value="ENSG00000147256.12"/>
</dbReference>
<dbReference type="Ensembl" id="ENST00000639280.1">
    <molecule id="Q6ZRI8-3"/>
    <property type="protein sequence ID" value="ENSP00000492307.1"/>
    <property type="gene ID" value="ENSG00000147256.12"/>
</dbReference>
<dbReference type="GeneID" id="158763"/>
<dbReference type="KEGG" id="hsa:158763"/>
<dbReference type="MANE-Select" id="ENST00000276211.10">
    <property type="protein sequence ID" value="ENSP00000276211.5"/>
    <property type="RefSeq nucleotide sequence ID" value="NM_144967.4"/>
    <property type="RefSeq protein sequence ID" value="NP_659404.2"/>
</dbReference>
<dbReference type="UCSC" id="uc004evz.5">
    <molecule id="Q6ZRI8-1"/>
    <property type="organism name" value="human"/>
</dbReference>
<dbReference type="AGR" id="HGNC:26388"/>
<dbReference type="CTD" id="158763"/>
<dbReference type="DisGeNET" id="158763"/>
<dbReference type="GeneCards" id="ARHGAP36"/>
<dbReference type="HGNC" id="HGNC:26388">
    <property type="gene designation" value="ARHGAP36"/>
</dbReference>
<dbReference type="HPA" id="ENSG00000147256">
    <property type="expression patterns" value="Group enriched (adrenal gland, brain, pituitary gland)"/>
</dbReference>
<dbReference type="MIM" id="300937">
    <property type="type" value="gene"/>
</dbReference>
<dbReference type="MIM" id="301845">
    <property type="type" value="phenotype"/>
</dbReference>
<dbReference type="neXtProt" id="NX_Q6ZRI8"/>
<dbReference type="OpenTargets" id="ENSG00000147256"/>
<dbReference type="PharmGKB" id="PA165756384"/>
<dbReference type="VEuPathDB" id="HostDB:ENSG00000147256"/>
<dbReference type="eggNOG" id="KOG2710">
    <property type="taxonomic scope" value="Eukaryota"/>
</dbReference>
<dbReference type="GeneTree" id="ENSGT00940000153904"/>
<dbReference type="HOGENOM" id="CLU_012874_1_1_1"/>
<dbReference type="InParanoid" id="Q6ZRI8"/>
<dbReference type="OMA" id="NTFEKWF"/>
<dbReference type="OrthoDB" id="10024839at2759"/>
<dbReference type="PAN-GO" id="Q6ZRI8">
    <property type="GO annotations" value="0 GO annotations based on evolutionary models"/>
</dbReference>
<dbReference type="PhylomeDB" id="Q6ZRI8"/>
<dbReference type="TreeFam" id="TF316710"/>
<dbReference type="PathwayCommons" id="Q6ZRI8"/>
<dbReference type="SignaLink" id="Q6ZRI8"/>
<dbReference type="BioGRID-ORCS" id="158763">
    <property type="hits" value="13 hits in 764 CRISPR screens"/>
</dbReference>
<dbReference type="GenomeRNAi" id="158763"/>
<dbReference type="Pharos" id="Q6ZRI8">
    <property type="development level" value="Tbio"/>
</dbReference>
<dbReference type="PRO" id="PR:Q6ZRI8"/>
<dbReference type="Proteomes" id="UP000005640">
    <property type="component" value="Chromosome X"/>
</dbReference>
<dbReference type="RNAct" id="Q6ZRI8">
    <property type="molecule type" value="protein"/>
</dbReference>
<dbReference type="Bgee" id="ENSG00000147256">
    <property type="expression patterns" value="Expressed in adrenal tissue and 95 other cell types or tissues"/>
</dbReference>
<dbReference type="ExpressionAtlas" id="Q6ZRI8">
    <property type="expression patterns" value="baseline and differential"/>
</dbReference>
<dbReference type="GO" id="GO:0005096">
    <property type="term" value="F:GTPase activator activity"/>
    <property type="evidence" value="ECO:0007669"/>
    <property type="project" value="UniProtKB-KW"/>
</dbReference>
<dbReference type="GO" id="GO:0007165">
    <property type="term" value="P:signal transduction"/>
    <property type="evidence" value="ECO:0007669"/>
    <property type="project" value="InterPro"/>
</dbReference>
<dbReference type="CDD" id="cd04376">
    <property type="entry name" value="RhoGAP_ARHGAP6"/>
    <property type="match status" value="1"/>
</dbReference>
<dbReference type="FunFam" id="1.10.555.10:FF:000017">
    <property type="entry name" value="Rho GTPase activating protein 6"/>
    <property type="match status" value="1"/>
</dbReference>
<dbReference type="Gene3D" id="1.10.555.10">
    <property type="entry name" value="Rho GTPase activation protein"/>
    <property type="match status" value="1"/>
</dbReference>
<dbReference type="InterPro" id="IPR041852">
    <property type="entry name" value="ARHGAP6_RhoGAP"/>
</dbReference>
<dbReference type="InterPro" id="IPR008936">
    <property type="entry name" value="Rho_GTPase_activation_prot"/>
</dbReference>
<dbReference type="InterPro" id="IPR037863">
    <property type="entry name" value="RHOGAP6/36"/>
</dbReference>
<dbReference type="InterPro" id="IPR000198">
    <property type="entry name" value="RhoGAP_dom"/>
</dbReference>
<dbReference type="PANTHER" id="PTHR12635:SF8">
    <property type="entry name" value="RHO GTPASE-ACTIVATING PROTEIN 36"/>
    <property type="match status" value="1"/>
</dbReference>
<dbReference type="PANTHER" id="PTHR12635">
    <property type="entry name" value="RHO-GTPASE-ACTIVATING PROTEIN 6 FAMILY MEMBER"/>
    <property type="match status" value="1"/>
</dbReference>
<dbReference type="Pfam" id="PF00620">
    <property type="entry name" value="RhoGAP"/>
    <property type="match status" value="1"/>
</dbReference>
<dbReference type="SMART" id="SM00324">
    <property type="entry name" value="RhoGAP"/>
    <property type="match status" value="1"/>
</dbReference>
<dbReference type="SUPFAM" id="SSF48350">
    <property type="entry name" value="GTPase activation domain, GAP"/>
    <property type="match status" value="1"/>
</dbReference>
<dbReference type="PROSITE" id="PS50238">
    <property type="entry name" value="RHOGAP"/>
    <property type="match status" value="1"/>
</dbReference>
<protein>
    <recommendedName>
        <fullName>Rho GTPase-activating protein 36</fullName>
    </recommendedName>
</protein>
<proteinExistence type="evidence at protein level"/>
<sequence>MGGCIPFLKAARALCPRIMPPLLLLSAFIFLVSVLGGAPGHNPDRRTKMVSIHSLSELERLKLQETAYHELVARHFLSEFKPDRALPIDRPNTLDKWFLILRGQQRAVSHKTFGISLEEVLVNEFTRRKHLELTATMQVEEATGQAAGRRRGNVVRRVFGRIRRFFSRRRNEPTLPREFTRRGRRGAVSVDSLAELEDGALLLQTLQLSKISFPIGQRLLGSKRKMSLNPIAKQIPQVVEACCQFIEKHGLSAVGIFTLEYSVQRVRQLREEFDQGLDVVLDDNQNVHDVAALLKEFFRDMKDSLLPDDLYMSFLLTATLKPQDQLSALQLLVYLMPPCHSDTLERLLKALHKITENCEDSIGIDGQLVPGNRMTSTNLALVFGSALLKKGKFGKRESRKTKLGIDHYVASVNVVRAMIDNWDVLFQVPPHIQRQVAKRVWKSSPEALDFIRRRNLRKIQSARIKMEEDALLSDPVETSAEARAAVLAQSKPSDEGSSEEPAVPSGTARSHDDEEGAGNPPIPEQDRPLLRVPREKEAKTGVSYFFP</sequence>
<name>RHG36_HUMAN</name>
<accession>Q6ZRI8</accession>
<accession>B7Z234</accession>
<accession>B7Z439</accession>
<accession>Q5JRL9</accession>
<accession>Q5JRM0</accession>
<accession>Q5JRM1</accession>
<accession>Q96NU6</accession>
<feature type="signal peptide" evidence="2">
    <location>
        <begin position="1"/>
        <end position="40"/>
    </location>
</feature>
<feature type="chain" id="PRO_0000256699" description="Rho GTPase-activating protein 36">
    <location>
        <begin position="41"/>
        <end position="547"/>
    </location>
</feature>
<feature type="domain" description="Rho-GAP" evidence="3">
    <location>
        <begin position="226"/>
        <end position="426"/>
    </location>
</feature>
<feature type="region of interest" description="Disordered" evidence="4">
    <location>
        <begin position="485"/>
        <end position="547"/>
    </location>
</feature>
<feature type="compositionally biased region" description="Basic and acidic residues" evidence="4">
    <location>
        <begin position="524"/>
        <end position="539"/>
    </location>
</feature>
<feature type="site" description="Arginine finger; crucial for GTP hydrolysis by stabilizing the transition state" evidence="3">
    <location>
        <position position="258"/>
    </location>
</feature>
<feature type="splice variant" id="VSP_021357" description="In isoform 3." evidence="6">
    <location>
        <begin position="1"/>
        <end position="136"/>
    </location>
</feature>
<feature type="splice variant" id="VSP_039235" description="In isoform 5." evidence="6">
    <location>
        <begin position="1"/>
        <end position="48"/>
    </location>
</feature>
<feature type="splice variant" id="VSP_021358" description="In isoform 2." evidence="7">
    <original>MGGCIPFLKAARALCPRIMPPLLLLSAFIFLV</original>
    <variation>M</variation>
    <location>
        <begin position="1"/>
        <end position="32"/>
    </location>
</feature>
<feature type="splice variant" id="VSP_039236" description="In isoform 4." evidence="6">
    <original>MGGCIPFLKAARALCPRIMPPLLLLSAFIFL</original>
    <variation>MAWILDCLFASAFEPRPRR</variation>
    <location>
        <begin position="1"/>
        <end position="31"/>
    </location>
</feature>
<feature type="sequence conflict" description="In Ref. 1; BAH12425." evidence="8" ref="1">
    <original>H</original>
    <variation>R</variation>
    <location>
        <position position="340"/>
    </location>
</feature>
<reference key="1">
    <citation type="journal article" date="2004" name="Nat. Genet.">
        <title>Complete sequencing and characterization of 21,243 full-length human cDNAs.</title>
        <authorList>
            <person name="Ota T."/>
            <person name="Suzuki Y."/>
            <person name="Nishikawa T."/>
            <person name="Otsuki T."/>
            <person name="Sugiyama T."/>
            <person name="Irie R."/>
            <person name="Wakamatsu A."/>
            <person name="Hayashi K."/>
            <person name="Sato H."/>
            <person name="Nagai K."/>
            <person name="Kimura K."/>
            <person name="Makita H."/>
            <person name="Sekine M."/>
            <person name="Obayashi M."/>
            <person name="Nishi T."/>
            <person name="Shibahara T."/>
            <person name="Tanaka T."/>
            <person name="Ishii S."/>
            <person name="Yamamoto J."/>
            <person name="Saito K."/>
            <person name="Kawai Y."/>
            <person name="Isono Y."/>
            <person name="Nakamura Y."/>
            <person name="Nagahari K."/>
            <person name="Murakami K."/>
            <person name="Yasuda T."/>
            <person name="Iwayanagi T."/>
            <person name="Wagatsuma M."/>
            <person name="Shiratori A."/>
            <person name="Sudo H."/>
            <person name="Hosoiri T."/>
            <person name="Kaku Y."/>
            <person name="Kodaira H."/>
            <person name="Kondo H."/>
            <person name="Sugawara M."/>
            <person name="Takahashi M."/>
            <person name="Kanda K."/>
            <person name="Yokoi T."/>
            <person name="Furuya T."/>
            <person name="Kikkawa E."/>
            <person name="Omura Y."/>
            <person name="Abe K."/>
            <person name="Kamihara K."/>
            <person name="Katsuta N."/>
            <person name="Sato K."/>
            <person name="Tanikawa M."/>
            <person name="Yamazaki M."/>
            <person name="Ninomiya K."/>
            <person name="Ishibashi T."/>
            <person name="Yamashita H."/>
            <person name="Murakawa K."/>
            <person name="Fujimori K."/>
            <person name="Tanai H."/>
            <person name="Kimata M."/>
            <person name="Watanabe M."/>
            <person name="Hiraoka S."/>
            <person name="Chiba Y."/>
            <person name="Ishida S."/>
            <person name="Ono Y."/>
            <person name="Takiguchi S."/>
            <person name="Watanabe S."/>
            <person name="Yosida M."/>
            <person name="Hotuta T."/>
            <person name="Kusano J."/>
            <person name="Kanehori K."/>
            <person name="Takahashi-Fujii A."/>
            <person name="Hara H."/>
            <person name="Tanase T.-O."/>
            <person name="Nomura Y."/>
            <person name="Togiya S."/>
            <person name="Komai F."/>
            <person name="Hara R."/>
            <person name="Takeuchi K."/>
            <person name="Arita M."/>
            <person name="Imose N."/>
            <person name="Musashino K."/>
            <person name="Yuuki H."/>
            <person name="Oshima A."/>
            <person name="Sasaki N."/>
            <person name="Aotsuka S."/>
            <person name="Yoshikawa Y."/>
            <person name="Matsunawa H."/>
            <person name="Ichihara T."/>
            <person name="Shiohata N."/>
            <person name="Sano S."/>
            <person name="Moriya S."/>
            <person name="Momiyama H."/>
            <person name="Satoh N."/>
            <person name="Takami S."/>
            <person name="Terashima Y."/>
            <person name="Suzuki O."/>
            <person name="Nakagawa S."/>
            <person name="Senoh A."/>
            <person name="Mizoguchi H."/>
            <person name="Goto Y."/>
            <person name="Shimizu F."/>
            <person name="Wakebe H."/>
            <person name="Hishigaki H."/>
            <person name="Watanabe T."/>
            <person name="Sugiyama A."/>
            <person name="Takemoto M."/>
            <person name="Kawakami B."/>
            <person name="Yamazaki M."/>
            <person name="Watanabe K."/>
            <person name="Kumagai A."/>
            <person name="Itakura S."/>
            <person name="Fukuzumi Y."/>
            <person name="Fujimori Y."/>
            <person name="Komiyama M."/>
            <person name="Tashiro H."/>
            <person name="Tanigami A."/>
            <person name="Fujiwara T."/>
            <person name="Ono T."/>
            <person name="Yamada K."/>
            <person name="Fujii Y."/>
            <person name="Ozaki K."/>
            <person name="Hirao M."/>
            <person name="Ohmori Y."/>
            <person name="Kawabata A."/>
            <person name="Hikiji T."/>
            <person name="Kobatake N."/>
            <person name="Inagaki H."/>
            <person name="Ikema Y."/>
            <person name="Okamoto S."/>
            <person name="Okitani R."/>
            <person name="Kawakami T."/>
            <person name="Noguchi S."/>
            <person name="Itoh T."/>
            <person name="Shigeta K."/>
            <person name="Senba T."/>
            <person name="Matsumura K."/>
            <person name="Nakajima Y."/>
            <person name="Mizuno T."/>
            <person name="Morinaga M."/>
            <person name="Sasaki M."/>
            <person name="Togashi T."/>
            <person name="Oyama M."/>
            <person name="Hata H."/>
            <person name="Watanabe M."/>
            <person name="Komatsu T."/>
            <person name="Mizushima-Sugano J."/>
            <person name="Satoh T."/>
            <person name="Shirai Y."/>
            <person name="Takahashi Y."/>
            <person name="Nakagawa K."/>
            <person name="Okumura K."/>
            <person name="Nagase T."/>
            <person name="Nomura N."/>
            <person name="Kikuchi H."/>
            <person name="Masuho Y."/>
            <person name="Yamashita R."/>
            <person name="Nakai K."/>
            <person name="Yada T."/>
            <person name="Nakamura Y."/>
            <person name="Ohara O."/>
            <person name="Isogai T."/>
            <person name="Sugano S."/>
        </authorList>
    </citation>
    <scope>NUCLEOTIDE SEQUENCE [LARGE SCALE MRNA] (ISOFORMS 1; 3; 4 AND 5)</scope>
    <source>
        <tissue>Adrenal gland</tissue>
        <tissue>Amygdala</tissue>
        <tissue>Testis</tissue>
        <tissue>Tongue</tissue>
    </source>
</reference>
<reference key="2">
    <citation type="journal article" date="2005" name="Nature">
        <title>The DNA sequence of the human X chromosome.</title>
        <authorList>
            <person name="Ross M.T."/>
            <person name="Grafham D.V."/>
            <person name="Coffey A.J."/>
            <person name="Scherer S."/>
            <person name="McLay K."/>
            <person name="Muzny D."/>
            <person name="Platzer M."/>
            <person name="Howell G.R."/>
            <person name="Burrows C."/>
            <person name="Bird C.P."/>
            <person name="Frankish A."/>
            <person name="Lovell F.L."/>
            <person name="Howe K.L."/>
            <person name="Ashurst J.L."/>
            <person name="Fulton R.S."/>
            <person name="Sudbrak R."/>
            <person name="Wen G."/>
            <person name="Jones M.C."/>
            <person name="Hurles M.E."/>
            <person name="Andrews T.D."/>
            <person name="Scott C.E."/>
            <person name="Searle S."/>
            <person name="Ramser J."/>
            <person name="Whittaker A."/>
            <person name="Deadman R."/>
            <person name="Carter N.P."/>
            <person name="Hunt S.E."/>
            <person name="Chen R."/>
            <person name="Cree A."/>
            <person name="Gunaratne P."/>
            <person name="Havlak P."/>
            <person name="Hodgson A."/>
            <person name="Metzker M.L."/>
            <person name="Richards S."/>
            <person name="Scott G."/>
            <person name="Steffen D."/>
            <person name="Sodergren E."/>
            <person name="Wheeler D.A."/>
            <person name="Worley K.C."/>
            <person name="Ainscough R."/>
            <person name="Ambrose K.D."/>
            <person name="Ansari-Lari M.A."/>
            <person name="Aradhya S."/>
            <person name="Ashwell R.I."/>
            <person name="Babbage A.K."/>
            <person name="Bagguley C.L."/>
            <person name="Ballabio A."/>
            <person name="Banerjee R."/>
            <person name="Barker G.E."/>
            <person name="Barlow K.F."/>
            <person name="Barrett I.P."/>
            <person name="Bates K.N."/>
            <person name="Beare D.M."/>
            <person name="Beasley H."/>
            <person name="Beasley O."/>
            <person name="Beck A."/>
            <person name="Bethel G."/>
            <person name="Blechschmidt K."/>
            <person name="Brady N."/>
            <person name="Bray-Allen S."/>
            <person name="Bridgeman A.M."/>
            <person name="Brown A.J."/>
            <person name="Brown M.J."/>
            <person name="Bonnin D."/>
            <person name="Bruford E.A."/>
            <person name="Buhay C."/>
            <person name="Burch P."/>
            <person name="Burford D."/>
            <person name="Burgess J."/>
            <person name="Burrill W."/>
            <person name="Burton J."/>
            <person name="Bye J.M."/>
            <person name="Carder C."/>
            <person name="Carrel L."/>
            <person name="Chako J."/>
            <person name="Chapman J.C."/>
            <person name="Chavez D."/>
            <person name="Chen E."/>
            <person name="Chen G."/>
            <person name="Chen Y."/>
            <person name="Chen Z."/>
            <person name="Chinault C."/>
            <person name="Ciccodicola A."/>
            <person name="Clark S.Y."/>
            <person name="Clarke G."/>
            <person name="Clee C.M."/>
            <person name="Clegg S."/>
            <person name="Clerc-Blankenburg K."/>
            <person name="Clifford K."/>
            <person name="Cobley V."/>
            <person name="Cole C.G."/>
            <person name="Conquer J.S."/>
            <person name="Corby N."/>
            <person name="Connor R.E."/>
            <person name="David R."/>
            <person name="Davies J."/>
            <person name="Davis C."/>
            <person name="Davis J."/>
            <person name="Delgado O."/>
            <person name="Deshazo D."/>
            <person name="Dhami P."/>
            <person name="Ding Y."/>
            <person name="Dinh H."/>
            <person name="Dodsworth S."/>
            <person name="Draper H."/>
            <person name="Dugan-Rocha S."/>
            <person name="Dunham A."/>
            <person name="Dunn M."/>
            <person name="Durbin K.J."/>
            <person name="Dutta I."/>
            <person name="Eades T."/>
            <person name="Ellwood M."/>
            <person name="Emery-Cohen A."/>
            <person name="Errington H."/>
            <person name="Evans K.L."/>
            <person name="Faulkner L."/>
            <person name="Francis F."/>
            <person name="Frankland J."/>
            <person name="Fraser A.E."/>
            <person name="Galgoczy P."/>
            <person name="Gilbert J."/>
            <person name="Gill R."/>
            <person name="Gloeckner G."/>
            <person name="Gregory S.G."/>
            <person name="Gribble S."/>
            <person name="Griffiths C."/>
            <person name="Grocock R."/>
            <person name="Gu Y."/>
            <person name="Gwilliam R."/>
            <person name="Hamilton C."/>
            <person name="Hart E.A."/>
            <person name="Hawes A."/>
            <person name="Heath P.D."/>
            <person name="Heitmann K."/>
            <person name="Hennig S."/>
            <person name="Hernandez J."/>
            <person name="Hinzmann B."/>
            <person name="Ho S."/>
            <person name="Hoffs M."/>
            <person name="Howden P.J."/>
            <person name="Huckle E.J."/>
            <person name="Hume J."/>
            <person name="Hunt P.J."/>
            <person name="Hunt A.R."/>
            <person name="Isherwood J."/>
            <person name="Jacob L."/>
            <person name="Johnson D."/>
            <person name="Jones S."/>
            <person name="de Jong P.J."/>
            <person name="Joseph S.S."/>
            <person name="Keenan S."/>
            <person name="Kelly S."/>
            <person name="Kershaw J.K."/>
            <person name="Khan Z."/>
            <person name="Kioschis P."/>
            <person name="Klages S."/>
            <person name="Knights A.J."/>
            <person name="Kosiura A."/>
            <person name="Kovar-Smith C."/>
            <person name="Laird G.K."/>
            <person name="Langford C."/>
            <person name="Lawlor S."/>
            <person name="Leversha M."/>
            <person name="Lewis L."/>
            <person name="Liu W."/>
            <person name="Lloyd C."/>
            <person name="Lloyd D.M."/>
            <person name="Loulseged H."/>
            <person name="Loveland J.E."/>
            <person name="Lovell J.D."/>
            <person name="Lozado R."/>
            <person name="Lu J."/>
            <person name="Lyne R."/>
            <person name="Ma J."/>
            <person name="Maheshwari M."/>
            <person name="Matthews L.H."/>
            <person name="McDowall J."/>
            <person name="McLaren S."/>
            <person name="McMurray A."/>
            <person name="Meidl P."/>
            <person name="Meitinger T."/>
            <person name="Milne S."/>
            <person name="Miner G."/>
            <person name="Mistry S.L."/>
            <person name="Morgan M."/>
            <person name="Morris S."/>
            <person name="Mueller I."/>
            <person name="Mullikin J.C."/>
            <person name="Nguyen N."/>
            <person name="Nordsiek G."/>
            <person name="Nyakatura G."/>
            <person name="O'dell C.N."/>
            <person name="Okwuonu G."/>
            <person name="Palmer S."/>
            <person name="Pandian R."/>
            <person name="Parker D."/>
            <person name="Parrish J."/>
            <person name="Pasternak S."/>
            <person name="Patel D."/>
            <person name="Pearce A.V."/>
            <person name="Pearson D.M."/>
            <person name="Pelan S.E."/>
            <person name="Perez L."/>
            <person name="Porter K.M."/>
            <person name="Ramsey Y."/>
            <person name="Reichwald K."/>
            <person name="Rhodes S."/>
            <person name="Ridler K.A."/>
            <person name="Schlessinger D."/>
            <person name="Schueler M.G."/>
            <person name="Sehra H.K."/>
            <person name="Shaw-Smith C."/>
            <person name="Shen H."/>
            <person name="Sheridan E.M."/>
            <person name="Shownkeen R."/>
            <person name="Skuce C.D."/>
            <person name="Smith M.L."/>
            <person name="Sotheran E.C."/>
            <person name="Steingruber H.E."/>
            <person name="Steward C.A."/>
            <person name="Storey R."/>
            <person name="Swann R.M."/>
            <person name="Swarbreck D."/>
            <person name="Tabor P.E."/>
            <person name="Taudien S."/>
            <person name="Taylor T."/>
            <person name="Teague B."/>
            <person name="Thomas K."/>
            <person name="Thorpe A."/>
            <person name="Timms K."/>
            <person name="Tracey A."/>
            <person name="Trevanion S."/>
            <person name="Tromans A.C."/>
            <person name="d'Urso M."/>
            <person name="Verduzco D."/>
            <person name="Villasana D."/>
            <person name="Waldron L."/>
            <person name="Wall M."/>
            <person name="Wang Q."/>
            <person name="Warren J."/>
            <person name="Warry G.L."/>
            <person name="Wei X."/>
            <person name="West A."/>
            <person name="Whitehead S.L."/>
            <person name="Whiteley M.N."/>
            <person name="Wilkinson J.E."/>
            <person name="Willey D.L."/>
            <person name="Williams G."/>
            <person name="Williams L."/>
            <person name="Williamson A."/>
            <person name="Williamson H."/>
            <person name="Wilming L."/>
            <person name="Woodmansey R.L."/>
            <person name="Wray P.W."/>
            <person name="Yen J."/>
            <person name="Zhang J."/>
            <person name="Zhou J."/>
            <person name="Zoghbi H."/>
            <person name="Zorilla S."/>
            <person name="Buck D."/>
            <person name="Reinhardt R."/>
            <person name="Poustka A."/>
            <person name="Rosenthal A."/>
            <person name="Lehrach H."/>
            <person name="Meindl A."/>
            <person name="Minx P.J."/>
            <person name="Hillier L.W."/>
            <person name="Willard H.F."/>
            <person name="Wilson R.K."/>
            <person name="Waterston R.H."/>
            <person name="Rice C.M."/>
            <person name="Vaudin M."/>
            <person name="Coulson A."/>
            <person name="Nelson D.L."/>
            <person name="Weinstock G."/>
            <person name="Sulston J.E."/>
            <person name="Durbin R.M."/>
            <person name="Hubbard T."/>
            <person name="Gibbs R.A."/>
            <person name="Beck S."/>
            <person name="Rogers J."/>
            <person name="Bentley D.R."/>
        </authorList>
    </citation>
    <scope>NUCLEOTIDE SEQUENCE [LARGE SCALE GENOMIC DNA]</scope>
</reference>
<reference key="3">
    <citation type="submission" date="2005-09" db="EMBL/GenBank/DDBJ databases">
        <authorList>
            <person name="Mural R.J."/>
            <person name="Istrail S."/>
            <person name="Sutton G.G."/>
            <person name="Florea L."/>
            <person name="Halpern A.L."/>
            <person name="Mobarry C.M."/>
            <person name="Lippert R."/>
            <person name="Walenz B."/>
            <person name="Shatkay H."/>
            <person name="Dew I."/>
            <person name="Miller J.R."/>
            <person name="Flanigan M.J."/>
            <person name="Edwards N.J."/>
            <person name="Bolanos R."/>
            <person name="Fasulo D."/>
            <person name="Halldorsson B.V."/>
            <person name="Hannenhalli S."/>
            <person name="Turner R."/>
            <person name="Yooseph S."/>
            <person name="Lu F."/>
            <person name="Nusskern D.R."/>
            <person name="Shue B.C."/>
            <person name="Zheng X.H."/>
            <person name="Zhong F."/>
            <person name="Delcher A.L."/>
            <person name="Huson D.H."/>
            <person name="Kravitz S.A."/>
            <person name="Mouchard L."/>
            <person name="Reinert K."/>
            <person name="Remington K.A."/>
            <person name="Clark A.G."/>
            <person name="Waterman M.S."/>
            <person name="Eichler E.E."/>
            <person name="Adams M.D."/>
            <person name="Hunkapiller M.W."/>
            <person name="Myers E.W."/>
            <person name="Venter J.C."/>
        </authorList>
    </citation>
    <scope>NUCLEOTIDE SEQUENCE [LARGE SCALE GENOMIC DNA]</scope>
</reference>
<reference key="4">
    <citation type="journal article" date="2004" name="Genome Res.">
        <title>The status, quality, and expansion of the NIH full-length cDNA project: the Mammalian Gene Collection (MGC).</title>
        <authorList>
            <consortium name="The MGC Project Team"/>
        </authorList>
    </citation>
    <scope>NUCLEOTIDE SEQUENCE [LARGE SCALE MRNA] (ISOFORM 2)</scope>
    <source>
        <tissue>PNS</tissue>
    </source>
</reference>
<reference key="5">
    <citation type="journal article" date="2022" name="Br. J. Dermatol.">
        <title>Germline intergenic duplications at Xq26.1 underlie Bazex-Dupre-Christol basal cell carcinoma susceptibility syndrome.</title>
        <authorList>
            <person name="Liu Y."/>
            <person name="Banka S."/>
            <person name="Huang Y."/>
            <person name="Hardman-Smart J."/>
            <person name="Pye D."/>
            <person name="Torrelo A."/>
            <person name="Beaman G.M."/>
            <person name="Kazanietz M.G."/>
            <person name="Baker M.J."/>
            <person name="Ferrazzano C."/>
            <person name="Shi C."/>
            <person name="Orozco G."/>
            <person name="Eyre S."/>
            <person name="van Geel M."/>
            <person name="Bygum A."/>
            <person name="Fischer J."/>
            <person name="Miedzybrodzka Z."/>
            <person name="Abuzahra F."/>
            <person name="Ruebben A."/>
            <person name="Cuvertino S."/>
            <person name="Ellingford J.M."/>
            <person name="Smith M.J."/>
            <person name="Evans D.G."/>
            <person name="Weppner-Parren L.J.M.T."/>
            <person name="van Steensel M.A.M."/>
            <person name="Chaudhary I.H."/>
            <person name="Mangham D.C."/>
            <person name="Lear J.T."/>
            <person name="Paus R."/>
            <person name="Frank J."/>
            <person name="Newman W.G."/>
            <person name="Zhang X."/>
        </authorList>
    </citation>
    <scope>TISSUE SPECIFICITY</scope>
    <scope>INTERACTION WITH RAC1</scope>
    <scope>INVOLVEMENT IN BDCS</scope>
</reference>
<evidence type="ECO:0000250" key="1"/>
<evidence type="ECO:0000255" key="2"/>
<evidence type="ECO:0000255" key="3">
    <source>
        <dbReference type="PROSITE-ProRule" id="PRU00172"/>
    </source>
</evidence>
<evidence type="ECO:0000256" key="4">
    <source>
        <dbReference type="SAM" id="MobiDB-lite"/>
    </source>
</evidence>
<evidence type="ECO:0000269" key="5">
    <source>
    </source>
</evidence>
<evidence type="ECO:0000303" key="6">
    <source>
    </source>
</evidence>
<evidence type="ECO:0000303" key="7">
    <source>
    </source>
</evidence>
<evidence type="ECO:0000305" key="8"/>
<keyword id="KW-0025">Alternative splicing</keyword>
<keyword id="KW-0343">GTPase activation</keyword>
<keyword id="KW-1063">Hypotrichosis</keyword>
<keyword id="KW-1267">Proteomics identification</keyword>
<keyword id="KW-1185">Reference proteome</keyword>
<keyword id="KW-0732">Signal</keyword>
<organism>
    <name type="scientific">Homo sapiens</name>
    <name type="common">Human</name>
    <dbReference type="NCBI Taxonomy" id="9606"/>
    <lineage>
        <taxon>Eukaryota</taxon>
        <taxon>Metazoa</taxon>
        <taxon>Chordata</taxon>
        <taxon>Craniata</taxon>
        <taxon>Vertebrata</taxon>
        <taxon>Euteleostomi</taxon>
        <taxon>Mammalia</taxon>
        <taxon>Eutheria</taxon>
        <taxon>Euarchontoglires</taxon>
        <taxon>Primates</taxon>
        <taxon>Haplorrhini</taxon>
        <taxon>Catarrhini</taxon>
        <taxon>Hominidae</taxon>
        <taxon>Homo</taxon>
    </lineage>
</organism>